<feature type="chain" id="PRO_1000148507" description="Phycoerythrobilin:ferredoxin oxidoreductase">
    <location>
        <begin position="1"/>
        <end position="253"/>
    </location>
</feature>
<keyword id="KW-0560">Oxidoreductase</keyword>
<keyword id="KW-1185">Reference proteome</keyword>
<comment type="function">
    <text evidence="1">Catalyzes the two-electron reduction of the C2 and C3(1) diene system of 15,16-dihydrobiliverdin.</text>
</comment>
<comment type="catalytic activity">
    <reaction evidence="1">
        <text>(3Z)-phycoerythrobilin + oxidized 2[4Fe-4S]-[ferredoxin] = 15,16-dihydrobiliverdin + reduced 2[4Fe-4S]-[ferredoxin] + 2 H(+)</text>
        <dbReference type="Rhea" id="RHEA:22092"/>
        <dbReference type="Rhea" id="RHEA-COMP:10002"/>
        <dbReference type="Rhea" id="RHEA-COMP:10004"/>
        <dbReference type="ChEBI" id="CHEBI:15378"/>
        <dbReference type="ChEBI" id="CHEBI:33722"/>
        <dbReference type="ChEBI" id="CHEBI:33723"/>
        <dbReference type="ChEBI" id="CHEBI:57438"/>
        <dbReference type="ChEBI" id="CHEBI:57899"/>
        <dbReference type="EC" id="1.3.7.3"/>
    </reaction>
</comment>
<comment type="similarity">
    <text evidence="1">Belongs to the HY2 family.</text>
</comment>
<organism>
    <name type="scientific">Prochlorococcus marinus (strain MIT 9301)</name>
    <dbReference type="NCBI Taxonomy" id="167546"/>
    <lineage>
        <taxon>Bacteria</taxon>
        <taxon>Bacillati</taxon>
        <taxon>Cyanobacteriota</taxon>
        <taxon>Cyanophyceae</taxon>
        <taxon>Synechococcales</taxon>
        <taxon>Prochlorococcaceae</taxon>
        <taxon>Prochlorococcus</taxon>
    </lineage>
</organism>
<proteinExistence type="inferred from homology"/>
<gene>
    <name evidence="1" type="primary">pebB</name>
    <name type="ordered locus">P9301_17841</name>
</gene>
<reference key="1">
    <citation type="journal article" date="2007" name="PLoS Genet.">
        <title>Patterns and implications of gene gain and loss in the evolution of Prochlorococcus.</title>
        <authorList>
            <person name="Kettler G.C."/>
            <person name="Martiny A.C."/>
            <person name="Huang K."/>
            <person name="Zucker J."/>
            <person name="Coleman M.L."/>
            <person name="Rodrigue S."/>
            <person name="Chen F."/>
            <person name="Lapidus A."/>
            <person name="Ferriera S."/>
            <person name="Johnson J."/>
            <person name="Steglich C."/>
            <person name="Church G.M."/>
            <person name="Richardson P."/>
            <person name="Chisholm S.W."/>
        </authorList>
    </citation>
    <scope>NUCLEOTIDE SEQUENCE [LARGE SCALE GENOMIC DNA]</scope>
    <source>
        <strain>MIT 9301</strain>
    </source>
</reference>
<dbReference type="EC" id="1.3.7.3" evidence="1"/>
<dbReference type="EMBL" id="CP000576">
    <property type="protein sequence ID" value="ABO18407.1"/>
    <property type="molecule type" value="Genomic_DNA"/>
</dbReference>
<dbReference type="RefSeq" id="WP_011863695.1">
    <property type="nucleotide sequence ID" value="NC_009091.1"/>
</dbReference>
<dbReference type="SMR" id="A3PF82"/>
<dbReference type="STRING" id="167546.P9301_17841"/>
<dbReference type="KEGG" id="pmg:P9301_17841"/>
<dbReference type="eggNOG" id="ENOG502Z8GK">
    <property type="taxonomic scope" value="Bacteria"/>
</dbReference>
<dbReference type="HOGENOM" id="CLU_086208_1_0_3"/>
<dbReference type="OrthoDB" id="421401at2"/>
<dbReference type="Proteomes" id="UP000001430">
    <property type="component" value="Chromosome"/>
</dbReference>
<dbReference type="GO" id="GO:0050897">
    <property type="term" value="F:cobalt ion binding"/>
    <property type="evidence" value="ECO:0007669"/>
    <property type="project" value="InterPro"/>
</dbReference>
<dbReference type="GO" id="GO:0050618">
    <property type="term" value="F:phycoerythrobilin:ferredoxin oxidoreductase activity"/>
    <property type="evidence" value="ECO:0007669"/>
    <property type="project" value="UniProtKB-UniRule"/>
</dbReference>
<dbReference type="GO" id="GO:0010024">
    <property type="term" value="P:phytochromobilin biosynthetic process"/>
    <property type="evidence" value="ECO:0007669"/>
    <property type="project" value="InterPro"/>
</dbReference>
<dbReference type="Gene3D" id="3.40.1500.20">
    <property type="match status" value="1"/>
</dbReference>
<dbReference type="HAMAP" id="MF_00793">
    <property type="entry name" value="PebB"/>
    <property type="match status" value="1"/>
</dbReference>
<dbReference type="InterPro" id="IPR009249">
    <property type="entry name" value="Ferredoxin-dep_bilin_Rdtase"/>
</dbReference>
<dbReference type="InterPro" id="IPR022827">
    <property type="entry name" value="Phycoerythrobilin_Fdx_Rdtase"/>
</dbReference>
<dbReference type="NCBIfam" id="NF009721">
    <property type="entry name" value="PRK13248.1"/>
    <property type="match status" value="1"/>
</dbReference>
<dbReference type="PANTHER" id="PTHR34557">
    <property type="entry name" value="PHYTOCHROMOBILIN:FERREDOXIN OXIDOREDUCTASE, CHLOROPLASTIC"/>
    <property type="match status" value="1"/>
</dbReference>
<dbReference type="PANTHER" id="PTHR34557:SF1">
    <property type="entry name" value="PHYTOCHROMOBILIN:FERREDOXIN OXIDOREDUCTASE, CHLOROPLASTIC"/>
    <property type="match status" value="1"/>
</dbReference>
<dbReference type="Pfam" id="PF05996">
    <property type="entry name" value="Fe_bilin_red"/>
    <property type="match status" value="1"/>
</dbReference>
<sequence>MLIQDTIFYRPDWRWHNFLKYLTNNLSKYNCLEKKIPSEYSYKDSTYGSKKLKKNVNLSTWGVTHKKRIQFARAVCINSPNYSVLNFLIIPNTIYNVPFFGVDFVSLPNSHLLVLDFQPSLKIQKQYNNELLEKLIKLKNHCHSSLPLAEKMSADVARFFSPGVIWSKLPKEERSDFLITNQLYTSFKEYLDLYLEILFESKEVNLELQKELINGQNEYLNYRRDNDPARPMLSSLFGKEFTESLIEEVLFTT</sequence>
<evidence type="ECO:0000255" key="1">
    <source>
        <dbReference type="HAMAP-Rule" id="MF_00793"/>
    </source>
</evidence>
<accession>A3PF82</accession>
<protein>
    <recommendedName>
        <fullName evidence="1">Phycoerythrobilin:ferredoxin oxidoreductase</fullName>
        <ecNumber evidence="1">1.3.7.3</ecNumber>
    </recommendedName>
</protein>
<name>PEBB_PROM0</name>